<evidence type="ECO:0000256" key="1">
    <source>
        <dbReference type="SAM" id="MobiDB-lite"/>
    </source>
</evidence>
<proteinExistence type="predicted"/>
<accession>P11639</accession>
<name>P32_MCMVK</name>
<protein>
    <recommendedName>
        <fullName>Uncharacterized protein p32</fullName>
    </recommendedName>
</protein>
<sequence length="289" mass="31593">MPSPCTYGDPTFNSRILEAVVADVLGGTEDDGGPSLEEWFDAQTLSDYTNCATDPPMATVHTRENDIKSWTELSENFPDLVRYPESLVETLLDTEHECGHFYDAPDSFQISVTAMFTDRCKCQFCDPNFQARSLSRALLGPLPESGDDAEWMEQAYTPDAELFVNEPTDDPIPTTDCKRPIQPTWSVDVYSKQVDSDWGLSDSTNVTVCSASSSLLPAGRGGIYFMCPRPEGIERVCLQVGAKIRSGAPNSGTITNLPGGTGYGTEWSDDGYETQWSDGPYSIPSGLSD</sequence>
<dbReference type="EMBL" id="X14736">
    <property type="protein sequence ID" value="CAA32861.1"/>
    <property type="molecule type" value="Genomic_RNA"/>
</dbReference>
<dbReference type="PIR" id="JQ0059">
    <property type="entry name" value="JQ0059"/>
</dbReference>
<dbReference type="RefSeq" id="NP_619717.1">
    <property type="nucleotide sequence ID" value="NC_003627.1"/>
</dbReference>
<dbReference type="KEGG" id="vg:2652936"/>
<dbReference type="Proteomes" id="UP000007071">
    <property type="component" value="Segment"/>
</dbReference>
<gene>
    <name type="ORF">ORF1</name>
</gene>
<organismHost>
    <name type="scientific">Zea mays</name>
    <name type="common">Maize</name>
    <dbReference type="NCBI Taxonomy" id="4577"/>
</organismHost>
<keyword id="KW-1185">Reference proteome</keyword>
<organism>
    <name type="scientific">Maize chlorotic mottle virus (isolate United States/Kansas/1987)</name>
    <name type="common">MCMV</name>
    <dbReference type="NCBI Taxonomy" id="882210"/>
    <lineage>
        <taxon>Viruses</taxon>
        <taxon>Riboviria</taxon>
        <taxon>Orthornavirae</taxon>
        <taxon>Kitrinoviricota</taxon>
        <taxon>Tolucaviricetes</taxon>
        <taxon>Tolivirales</taxon>
        <taxon>Tombusviridae</taxon>
        <taxon>Procedovirinae</taxon>
        <taxon>Machlomovirus</taxon>
        <taxon>Machlomovirus zeae</taxon>
    </lineage>
</organism>
<reference key="1">
    <citation type="journal article" date="1989" name="Nucleic Acids Res.">
        <title>The complete nucleotide sequence of the maize chlorotic mottle virus genome.</title>
        <authorList>
            <person name="Nutter R.C."/>
            <person name="Scheets K."/>
            <person name="Panganiban L.C."/>
            <person name="Lommel S.A."/>
        </authorList>
    </citation>
    <scope>NUCLEOTIDE SEQUENCE [GENOMIC RNA]</scope>
</reference>
<feature type="chain" id="PRO_0000222899" description="Uncharacterized protein p32">
    <location>
        <begin position="1"/>
        <end position="289"/>
    </location>
</feature>
<feature type="region of interest" description="Disordered" evidence="1">
    <location>
        <begin position="268"/>
        <end position="289"/>
    </location>
</feature>